<comment type="function">
    <text evidence="1">Binds 23S rRNA and is also seen to make contacts with the A and possibly P site tRNAs.</text>
</comment>
<comment type="subunit">
    <text evidence="1">Part of the 50S ribosomal subunit.</text>
</comment>
<comment type="similarity">
    <text evidence="1">Belongs to the universal ribosomal protein uL16 family.</text>
</comment>
<accession>B5XNA1</accession>
<evidence type="ECO:0000255" key="1">
    <source>
        <dbReference type="HAMAP-Rule" id="MF_01342"/>
    </source>
</evidence>
<evidence type="ECO:0000305" key="2"/>
<reference key="1">
    <citation type="journal article" date="2008" name="PLoS Genet.">
        <title>Complete genome sequence of the N2-fixing broad host range endophyte Klebsiella pneumoniae 342 and virulence predictions verified in mice.</title>
        <authorList>
            <person name="Fouts D.E."/>
            <person name="Tyler H.L."/>
            <person name="DeBoy R.T."/>
            <person name="Daugherty S."/>
            <person name="Ren Q."/>
            <person name="Badger J.H."/>
            <person name="Durkin A.S."/>
            <person name="Huot H."/>
            <person name="Shrivastava S."/>
            <person name="Kothari S."/>
            <person name="Dodson R.J."/>
            <person name="Mohamoud Y."/>
            <person name="Khouri H."/>
            <person name="Roesch L.F.W."/>
            <person name="Krogfelt K.A."/>
            <person name="Struve C."/>
            <person name="Triplett E.W."/>
            <person name="Methe B.A."/>
        </authorList>
    </citation>
    <scope>NUCLEOTIDE SEQUENCE [LARGE SCALE GENOMIC DNA]</scope>
    <source>
        <strain>342</strain>
    </source>
</reference>
<name>RL16_KLEP3</name>
<organism>
    <name type="scientific">Klebsiella pneumoniae (strain 342)</name>
    <dbReference type="NCBI Taxonomy" id="507522"/>
    <lineage>
        <taxon>Bacteria</taxon>
        <taxon>Pseudomonadati</taxon>
        <taxon>Pseudomonadota</taxon>
        <taxon>Gammaproteobacteria</taxon>
        <taxon>Enterobacterales</taxon>
        <taxon>Enterobacteriaceae</taxon>
        <taxon>Klebsiella/Raoultella group</taxon>
        <taxon>Klebsiella</taxon>
        <taxon>Klebsiella pneumoniae complex</taxon>
    </lineage>
</organism>
<protein>
    <recommendedName>
        <fullName evidence="1">Large ribosomal subunit protein uL16</fullName>
    </recommendedName>
    <alternativeName>
        <fullName evidence="2">50S ribosomal protein L16</fullName>
    </alternativeName>
</protein>
<keyword id="KW-0687">Ribonucleoprotein</keyword>
<keyword id="KW-0689">Ribosomal protein</keyword>
<keyword id="KW-0694">RNA-binding</keyword>
<keyword id="KW-0699">rRNA-binding</keyword>
<keyword id="KW-0820">tRNA-binding</keyword>
<proteinExistence type="inferred from homology"/>
<sequence>MLQPKRTKFRKVHKGRNRGLAQGTDVSFGTFGLKAVGRGRLTARQIEAARRAMTRAVKRQGKIWIRVFPDKPITEKPLEVRMGKGKGNVEYWVALIQPGKVLYEMDGVPEELAREAFGLAAAKLPIKTTFVTKTVM</sequence>
<gene>
    <name evidence="1" type="primary">rplP</name>
    <name type="ordered locus">KPK_0406</name>
</gene>
<feature type="chain" id="PRO_1000142984" description="Large ribosomal subunit protein uL16">
    <location>
        <begin position="1"/>
        <end position="136"/>
    </location>
</feature>
<dbReference type="EMBL" id="CP000964">
    <property type="protein sequence ID" value="ACI11063.1"/>
    <property type="molecule type" value="Genomic_DNA"/>
</dbReference>
<dbReference type="SMR" id="B5XNA1"/>
<dbReference type="KEGG" id="kpe:KPK_0406"/>
<dbReference type="HOGENOM" id="CLU_078858_2_1_6"/>
<dbReference type="Proteomes" id="UP000001734">
    <property type="component" value="Chromosome"/>
</dbReference>
<dbReference type="GO" id="GO:0022625">
    <property type="term" value="C:cytosolic large ribosomal subunit"/>
    <property type="evidence" value="ECO:0007669"/>
    <property type="project" value="TreeGrafter"/>
</dbReference>
<dbReference type="GO" id="GO:0019843">
    <property type="term" value="F:rRNA binding"/>
    <property type="evidence" value="ECO:0007669"/>
    <property type="project" value="UniProtKB-UniRule"/>
</dbReference>
<dbReference type="GO" id="GO:0003735">
    <property type="term" value="F:structural constituent of ribosome"/>
    <property type="evidence" value="ECO:0007669"/>
    <property type="project" value="InterPro"/>
</dbReference>
<dbReference type="GO" id="GO:0000049">
    <property type="term" value="F:tRNA binding"/>
    <property type="evidence" value="ECO:0007669"/>
    <property type="project" value="UniProtKB-KW"/>
</dbReference>
<dbReference type="GO" id="GO:0006412">
    <property type="term" value="P:translation"/>
    <property type="evidence" value="ECO:0007669"/>
    <property type="project" value="UniProtKB-UniRule"/>
</dbReference>
<dbReference type="CDD" id="cd01433">
    <property type="entry name" value="Ribosomal_L16_L10e"/>
    <property type="match status" value="1"/>
</dbReference>
<dbReference type="FunFam" id="3.90.1170.10:FF:000001">
    <property type="entry name" value="50S ribosomal protein L16"/>
    <property type="match status" value="1"/>
</dbReference>
<dbReference type="Gene3D" id="3.90.1170.10">
    <property type="entry name" value="Ribosomal protein L10e/L16"/>
    <property type="match status" value="1"/>
</dbReference>
<dbReference type="HAMAP" id="MF_01342">
    <property type="entry name" value="Ribosomal_uL16"/>
    <property type="match status" value="1"/>
</dbReference>
<dbReference type="InterPro" id="IPR047873">
    <property type="entry name" value="Ribosomal_uL16"/>
</dbReference>
<dbReference type="InterPro" id="IPR000114">
    <property type="entry name" value="Ribosomal_uL16_bact-type"/>
</dbReference>
<dbReference type="InterPro" id="IPR020798">
    <property type="entry name" value="Ribosomal_uL16_CS"/>
</dbReference>
<dbReference type="InterPro" id="IPR016180">
    <property type="entry name" value="Ribosomal_uL16_dom"/>
</dbReference>
<dbReference type="InterPro" id="IPR036920">
    <property type="entry name" value="Ribosomal_uL16_sf"/>
</dbReference>
<dbReference type="NCBIfam" id="TIGR01164">
    <property type="entry name" value="rplP_bact"/>
    <property type="match status" value="1"/>
</dbReference>
<dbReference type="PANTHER" id="PTHR12220">
    <property type="entry name" value="50S/60S RIBOSOMAL PROTEIN L16"/>
    <property type="match status" value="1"/>
</dbReference>
<dbReference type="PANTHER" id="PTHR12220:SF13">
    <property type="entry name" value="LARGE RIBOSOMAL SUBUNIT PROTEIN UL16M"/>
    <property type="match status" value="1"/>
</dbReference>
<dbReference type="Pfam" id="PF00252">
    <property type="entry name" value="Ribosomal_L16"/>
    <property type="match status" value="1"/>
</dbReference>
<dbReference type="PRINTS" id="PR00060">
    <property type="entry name" value="RIBOSOMALL16"/>
</dbReference>
<dbReference type="SUPFAM" id="SSF54686">
    <property type="entry name" value="Ribosomal protein L16p/L10e"/>
    <property type="match status" value="1"/>
</dbReference>
<dbReference type="PROSITE" id="PS00586">
    <property type="entry name" value="RIBOSOMAL_L16_1"/>
    <property type="match status" value="1"/>
</dbReference>
<dbReference type="PROSITE" id="PS00701">
    <property type="entry name" value="RIBOSOMAL_L16_2"/>
    <property type="match status" value="1"/>
</dbReference>